<comment type="function">
    <text evidence="3">RNA 2'-O-methyltransferase involved in the processing of the 34S pre-rRNA to 18S rRNA and in 40S ribosomal subunit formation.</text>
</comment>
<comment type="catalytic activity">
    <reaction evidence="3">
        <text>a ribonucleotide in rRNA + S-adenosyl-L-methionine = a 2'-O-methylribonucleotide in rRNA + S-adenosyl-L-homocysteine + H(+)</text>
        <dbReference type="Rhea" id="RHEA:48628"/>
        <dbReference type="Rhea" id="RHEA-COMP:12164"/>
        <dbReference type="Rhea" id="RHEA-COMP:12165"/>
        <dbReference type="ChEBI" id="CHEBI:15378"/>
        <dbReference type="ChEBI" id="CHEBI:57856"/>
        <dbReference type="ChEBI" id="CHEBI:59789"/>
        <dbReference type="ChEBI" id="CHEBI:90675"/>
        <dbReference type="ChEBI" id="CHEBI:90676"/>
    </reaction>
</comment>
<comment type="subunit">
    <text evidence="3">Interacts with NIP7.</text>
</comment>
<comment type="subcellular location">
    <subcellularLocation>
        <location evidence="3">Nucleus</location>
        <location evidence="3">Nucleolus</location>
    </subcellularLocation>
</comment>
<comment type="PTM">
    <text evidence="5">Citrullinated by PADI4.</text>
</comment>
<comment type="similarity">
    <text evidence="3">Belongs to the class I-like SAM-binding methyltransferase superfamily. RNA methyltransferase RlmE family. SPB1 subfamily.</text>
</comment>
<protein>
    <recommendedName>
        <fullName evidence="3">pre-rRNA 2'-O-ribose RNA methyltransferase FTSJ3</fullName>
        <ecNumber evidence="3">2.1.1.-</ecNumber>
    </recommendedName>
    <alternativeName>
        <fullName evidence="3">Protein ftsJ homolog 3</fullName>
    </alternativeName>
    <alternativeName>
        <fullName evidence="3">Putative rRNA methyltransferase 3</fullName>
    </alternativeName>
</protein>
<dbReference type="EC" id="2.1.1.-" evidence="3"/>
<dbReference type="EMBL" id="AK004996">
    <property type="protein sequence ID" value="BAB23730.1"/>
    <property type="molecule type" value="mRNA"/>
</dbReference>
<dbReference type="EMBL" id="AK145490">
    <property type="protein sequence ID" value="BAE26467.1"/>
    <property type="molecule type" value="mRNA"/>
</dbReference>
<dbReference type="EMBL" id="BC012281">
    <property type="protein sequence ID" value="AAH12281.1"/>
    <property type="molecule type" value="mRNA"/>
</dbReference>
<dbReference type="CCDS" id="CCDS25552.1"/>
<dbReference type="RefSeq" id="NP_079586.1">
    <property type="nucleotide sequence ID" value="NM_025310.3"/>
</dbReference>
<dbReference type="SMR" id="Q9DBE9"/>
<dbReference type="BioGRID" id="207815">
    <property type="interactions" value="40"/>
</dbReference>
<dbReference type="CORUM" id="Q9DBE9"/>
<dbReference type="FunCoup" id="Q9DBE9">
    <property type="interactions" value="3092"/>
</dbReference>
<dbReference type="STRING" id="10090.ENSMUSP00000021048"/>
<dbReference type="GlyGen" id="Q9DBE9">
    <property type="glycosylation" value="1 site, 1 O-linked glycan (1 site)"/>
</dbReference>
<dbReference type="iPTMnet" id="Q9DBE9"/>
<dbReference type="PhosphoSitePlus" id="Q9DBE9"/>
<dbReference type="jPOST" id="Q9DBE9"/>
<dbReference type="PaxDb" id="10090-ENSMUSP00000021048"/>
<dbReference type="PeptideAtlas" id="Q9DBE9"/>
<dbReference type="ProteomicsDB" id="261496"/>
<dbReference type="Pumba" id="Q9DBE9"/>
<dbReference type="Antibodypedia" id="31352">
    <property type="antibodies" value="116 antibodies from 24 providers"/>
</dbReference>
<dbReference type="Ensembl" id="ENSMUST00000021048.7">
    <property type="protein sequence ID" value="ENSMUSP00000021048.7"/>
    <property type="gene ID" value="ENSMUSG00000020706.14"/>
</dbReference>
<dbReference type="GeneID" id="56095"/>
<dbReference type="KEGG" id="mmu:56095"/>
<dbReference type="UCSC" id="uc007lym.1">
    <property type="organism name" value="mouse"/>
</dbReference>
<dbReference type="AGR" id="MGI:1860295"/>
<dbReference type="CTD" id="117246"/>
<dbReference type="MGI" id="MGI:1860295">
    <property type="gene designation" value="Ftsj3"/>
</dbReference>
<dbReference type="VEuPathDB" id="HostDB:ENSMUSG00000020706"/>
<dbReference type="eggNOG" id="KOG1098">
    <property type="taxonomic scope" value="Eukaryota"/>
</dbReference>
<dbReference type="GeneTree" id="ENSGT00550000075004"/>
<dbReference type="HOGENOM" id="CLU_009422_8_1_1"/>
<dbReference type="InParanoid" id="Q9DBE9"/>
<dbReference type="OMA" id="QRKDKYY"/>
<dbReference type="OrthoDB" id="289250at2759"/>
<dbReference type="PhylomeDB" id="Q9DBE9"/>
<dbReference type="TreeFam" id="TF106102"/>
<dbReference type="Reactome" id="R-MMU-6791226">
    <property type="pathway name" value="Major pathway of rRNA processing in the nucleolus and cytosol"/>
</dbReference>
<dbReference type="BioGRID-ORCS" id="56095">
    <property type="hits" value="29 hits in 78 CRISPR screens"/>
</dbReference>
<dbReference type="ChiTaRS" id="Ftsj3">
    <property type="organism name" value="mouse"/>
</dbReference>
<dbReference type="PRO" id="PR:Q9DBE9"/>
<dbReference type="Proteomes" id="UP000000589">
    <property type="component" value="Chromosome 11"/>
</dbReference>
<dbReference type="RNAct" id="Q9DBE9">
    <property type="molecule type" value="protein"/>
</dbReference>
<dbReference type="Bgee" id="ENSMUSG00000020706">
    <property type="expression patterns" value="Expressed in embryonic post-anal tail and 263 other cell types or tissues"/>
</dbReference>
<dbReference type="GO" id="GO:0005694">
    <property type="term" value="C:chromosome"/>
    <property type="evidence" value="ECO:0007669"/>
    <property type="project" value="Ensembl"/>
</dbReference>
<dbReference type="GO" id="GO:0005730">
    <property type="term" value="C:nucleolus"/>
    <property type="evidence" value="ECO:0007669"/>
    <property type="project" value="UniProtKB-SubCell"/>
</dbReference>
<dbReference type="GO" id="GO:0005654">
    <property type="term" value="C:nucleoplasm"/>
    <property type="evidence" value="ECO:0007669"/>
    <property type="project" value="Ensembl"/>
</dbReference>
<dbReference type="GO" id="GO:0030688">
    <property type="term" value="C:preribosome, small subunit precursor"/>
    <property type="evidence" value="ECO:0007669"/>
    <property type="project" value="UniProtKB-UniRule"/>
</dbReference>
<dbReference type="GO" id="GO:0062105">
    <property type="term" value="F:RNA 2'-O-methyltransferase activity"/>
    <property type="evidence" value="ECO:0000250"/>
    <property type="project" value="UniProtKB"/>
</dbReference>
<dbReference type="GO" id="GO:0008649">
    <property type="term" value="F:rRNA methyltransferase activity"/>
    <property type="evidence" value="ECO:0007669"/>
    <property type="project" value="UniProtKB-UniRule"/>
</dbReference>
<dbReference type="GO" id="GO:0001510">
    <property type="term" value="P:RNA methylation"/>
    <property type="evidence" value="ECO:0000250"/>
    <property type="project" value="UniProtKB"/>
</dbReference>
<dbReference type="FunFam" id="3.40.50.150:FF:000004">
    <property type="entry name" value="AdoMet-dependent rRNA methyltransferase SPB1"/>
    <property type="match status" value="1"/>
</dbReference>
<dbReference type="Gene3D" id="3.40.50.150">
    <property type="entry name" value="Vaccinia Virus protein VP39"/>
    <property type="match status" value="1"/>
</dbReference>
<dbReference type="HAMAP" id="MF_01547">
    <property type="entry name" value="RNA_methyltr_E"/>
    <property type="match status" value="1"/>
</dbReference>
<dbReference type="HAMAP" id="MF_03163">
    <property type="entry name" value="RNA_methyltr_E_SPB1"/>
    <property type="match status" value="1"/>
</dbReference>
<dbReference type="InterPro" id="IPR050082">
    <property type="entry name" value="RNA_methyltr_RlmE"/>
</dbReference>
<dbReference type="InterPro" id="IPR002877">
    <property type="entry name" value="RNA_MeTrfase_FtsJ_dom"/>
</dbReference>
<dbReference type="InterPro" id="IPR015507">
    <property type="entry name" value="rRNA-MeTfrase_E"/>
</dbReference>
<dbReference type="InterPro" id="IPR012920">
    <property type="entry name" value="rRNA_MeTfrase_SPB1-like_C"/>
</dbReference>
<dbReference type="InterPro" id="IPR024576">
    <property type="entry name" value="rRNA_MeTfrase_Spb1_DUF3381"/>
</dbReference>
<dbReference type="InterPro" id="IPR029063">
    <property type="entry name" value="SAM-dependent_MTases_sf"/>
</dbReference>
<dbReference type="InterPro" id="IPR028589">
    <property type="entry name" value="SPB1-like"/>
</dbReference>
<dbReference type="PANTHER" id="PTHR10920:SF13">
    <property type="entry name" value="PRE-RRNA 2'-O-RIBOSE RNA METHYLTRANSFERASE FTSJ3"/>
    <property type="match status" value="1"/>
</dbReference>
<dbReference type="PANTHER" id="PTHR10920">
    <property type="entry name" value="RIBOSOMAL RNA METHYLTRANSFERASE"/>
    <property type="match status" value="1"/>
</dbReference>
<dbReference type="Pfam" id="PF11861">
    <property type="entry name" value="DUF3381"/>
    <property type="match status" value="1"/>
</dbReference>
<dbReference type="Pfam" id="PF01728">
    <property type="entry name" value="FtsJ"/>
    <property type="match status" value="1"/>
</dbReference>
<dbReference type="Pfam" id="PF07780">
    <property type="entry name" value="Spb1_C"/>
    <property type="match status" value="1"/>
</dbReference>
<dbReference type="SUPFAM" id="SSF53335">
    <property type="entry name" value="S-adenosyl-L-methionine-dependent methyltransferases"/>
    <property type="match status" value="1"/>
</dbReference>
<keyword id="KW-0164">Citrullination</keyword>
<keyword id="KW-0175">Coiled coil</keyword>
<keyword id="KW-0903">Direct protein sequencing</keyword>
<keyword id="KW-1017">Isopeptide bond</keyword>
<keyword id="KW-0489">Methyltransferase</keyword>
<keyword id="KW-0539">Nucleus</keyword>
<keyword id="KW-0597">Phosphoprotein</keyword>
<keyword id="KW-1185">Reference proteome</keyword>
<keyword id="KW-0690">Ribosome biogenesis</keyword>
<keyword id="KW-0698">rRNA processing</keyword>
<keyword id="KW-0949">S-adenosyl-L-methionine</keyword>
<keyword id="KW-0808">Transferase</keyword>
<keyword id="KW-0832">Ubl conjugation</keyword>
<accession>Q9DBE9</accession>
<accession>Q3ULI1</accession>
<accession>Q921I7</accession>
<proteinExistence type="evidence at protein level"/>
<reference key="1">
    <citation type="journal article" date="2005" name="Science">
        <title>The transcriptional landscape of the mammalian genome.</title>
        <authorList>
            <person name="Carninci P."/>
            <person name="Kasukawa T."/>
            <person name="Katayama S."/>
            <person name="Gough J."/>
            <person name="Frith M.C."/>
            <person name="Maeda N."/>
            <person name="Oyama R."/>
            <person name="Ravasi T."/>
            <person name="Lenhard B."/>
            <person name="Wells C."/>
            <person name="Kodzius R."/>
            <person name="Shimokawa K."/>
            <person name="Bajic V.B."/>
            <person name="Brenner S.E."/>
            <person name="Batalov S."/>
            <person name="Forrest A.R."/>
            <person name="Zavolan M."/>
            <person name="Davis M.J."/>
            <person name="Wilming L.G."/>
            <person name="Aidinis V."/>
            <person name="Allen J.E."/>
            <person name="Ambesi-Impiombato A."/>
            <person name="Apweiler R."/>
            <person name="Aturaliya R.N."/>
            <person name="Bailey T.L."/>
            <person name="Bansal M."/>
            <person name="Baxter L."/>
            <person name="Beisel K.W."/>
            <person name="Bersano T."/>
            <person name="Bono H."/>
            <person name="Chalk A.M."/>
            <person name="Chiu K.P."/>
            <person name="Choudhary V."/>
            <person name="Christoffels A."/>
            <person name="Clutterbuck D.R."/>
            <person name="Crowe M.L."/>
            <person name="Dalla E."/>
            <person name="Dalrymple B.P."/>
            <person name="de Bono B."/>
            <person name="Della Gatta G."/>
            <person name="di Bernardo D."/>
            <person name="Down T."/>
            <person name="Engstrom P."/>
            <person name="Fagiolini M."/>
            <person name="Faulkner G."/>
            <person name="Fletcher C.F."/>
            <person name="Fukushima T."/>
            <person name="Furuno M."/>
            <person name="Futaki S."/>
            <person name="Gariboldi M."/>
            <person name="Georgii-Hemming P."/>
            <person name="Gingeras T.R."/>
            <person name="Gojobori T."/>
            <person name="Green R.E."/>
            <person name="Gustincich S."/>
            <person name="Harbers M."/>
            <person name="Hayashi Y."/>
            <person name="Hensch T.K."/>
            <person name="Hirokawa N."/>
            <person name="Hill D."/>
            <person name="Huminiecki L."/>
            <person name="Iacono M."/>
            <person name="Ikeo K."/>
            <person name="Iwama A."/>
            <person name="Ishikawa T."/>
            <person name="Jakt M."/>
            <person name="Kanapin A."/>
            <person name="Katoh M."/>
            <person name="Kawasawa Y."/>
            <person name="Kelso J."/>
            <person name="Kitamura H."/>
            <person name="Kitano H."/>
            <person name="Kollias G."/>
            <person name="Krishnan S.P."/>
            <person name="Kruger A."/>
            <person name="Kummerfeld S.K."/>
            <person name="Kurochkin I.V."/>
            <person name="Lareau L.F."/>
            <person name="Lazarevic D."/>
            <person name="Lipovich L."/>
            <person name="Liu J."/>
            <person name="Liuni S."/>
            <person name="McWilliam S."/>
            <person name="Madan Babu M."/>
            <person name="Madera M."/>
            <person name="Marchionni L."/>
            <person name="Matsuda H."/>
            <person name="Matsuzawa S."/>
            <person name="Miki H."/>
            <person name="Mignone F."/>
            <person name="Miyake S."/>
            <person name="Morris K."/>
            <person name="Mottagui-Tabar S."/>
            <person name="Mulder N."/>
            <person name="Nakano N."/>
            <person name="Nakauchi H."/>
            <person name="Ng P."/>
            <person name="Nilsson R."/>
            <person name="Nishiguchi S."/>
            <person name="Nishikawa S."/>
            <person name="Nori F."/>
            <person name="Ohara O."/>
            <person name="Okazaki Y."/>
            <person name="Orlando V."/>
            <person name="Pang K.C."/>
            <person name="Pavan W.J."/>
            <person name="Pavesi G."/>
            <person name="Pesole G."/>
            <person name="Petrovsky N."/>
            <person name="Piazza S."/>
            <person name="Reed J."/>
            <person name="Reid J.F."/>
            <person name="Ring B.Z."/>
            <person name="Ringwald M."/>
            <person name="Rost B."/>
            <person name="Ruan Y."/>
            <person name="Salzberg S.L."/>
            <person name="Sandelin A."/>
            <person name="Schneider C."/>
            <person name="Schoenbach C."/>
            <person name="Sekiguchi K."/>
            <person name="Semple C.A."/>
            <person name="Seno S."/>
            <person name="Sessa L."/>
            <person name="Sheng Y."/>
            <person name="Shibata Y."/>
            <person name="Shimada H."/>
            <person name="Shimada K."/>
            <person name="Silva D."/>
            <person name="Sinclair B."/>
            <person name="Sperling S."/>
            <person name="Stupka E."/>
            <person name="Sugiura K."/>
            <person name="Sultana R."/>
            <person name="Takenaka Y."/>
            <person name="Taki K."/>
            <person name="Tammoja K."/>
            <person name="Tan S.L."/>
            <person name="Tang S."/>
            <person name="Taylor M.S."/>
            <person name="Tegner J."/>
            <person name="Teichmann S.A."/>
            <person name="Ueda H.R."/>
            <person name="van Nimwegen E."/>
            <person name="Verardo R."/>
            <person name="Wei C.L."/>
            <person name="Yagi K."/>
            <person name="Yamanishi H."/>
            <person name="Zabarovsky E."/>
            <person name="Zhu S."/>
            <person name="Zimmer A."/>
            <person name="Hide W."/>
            <person name="Bult C."/>
            <person name="Grimmond S.M."/>
            <person name="Teasdale R.D."/>
            <person name="Liu E.T."/>
            <person name="Brusic V."/>
            <person name="Quackenbush J."/>
            <person name="Wahlestedt C."/>
            <person name="Mattick J.S."/>
            <person name="Hume D.A."/>
            <person name="Kai C."/>
            <person name="Sasaki D."/>
            <person name="Tomaru Y."/>
            <person name="Fukuda S."/>
            <person name="Kanamori-Katayama M."/>
            <person name="Suzuki M."/>
            <person name="Aoki J."/>
            <person name="Arakawa T."/>
            <person name="Iida J."/>
            <person name="Imamura K."/>
            <person name="Itoh M."/>
            <person name="Kato T."/>
            <person name="Kawaji H."/>
            <person name="Kawagashira N."/>
            <person name="Kawashima T."/>
            <person name="Kojima M."/>
            <person name="Kondo S."/>
            <person name="Konno H."/>
            <person name="Nakano K."/>
            <person name="Ninomiya N."/>
            <person name="Nishio T."/>
            <person name="Okada M."/>
            <person name="Plessy C."/>
            <person name="Shibata K."/>
            <person name="Shiraki T."/>
            <person name="Suzuki S."/>
            <person name="Tagami M."/>
            <person name="Waki K."/>
            <person name="Watahiki A."/>
            <person name="Okamura-Oho Y."/>
            <person name="Suzuki H."/>
            <person name="Kawai J."/>
            <person name="Hayashizaki Y."/>
        </authorList>
    </citation>
    <scope>NUCLEOTIDE SEQUENCE [LARGE SCALE MRNA]</scope>
    <source>
        <strain>C57BL/6J</strain>
        <tissue>Liver</tissue>
    </source>
</reference>
<reference key="2">
    <citation type="journal article" date="2004" name="Genome Res.">
        <title>The status, quality, and expansion of the NIH full-length cDNA project: the Mammalian Gene Collection (MGC).</title>
        <authorList>
            <consortium name="The MGC Project Team"/>
        </authorList>
    </citation>
    <scope>NUCLEOTIDE SEQUENCE [LARGE SCALE MRNA]</scope>
    <source>
        <strain>Czech II</strain>
        <tissue>Mammary gland</tissue>
    </source>
</reference>
<reference key="3">
    <citation type="submission" date="2009-01" db="UniProtKB">
        <authorList>
            <person name="Lubec G."/>
            <person name="Sunyer B."/>
            <person name="Chen W.-Q."/>
        </authorList>
    </citation>
    <scope>PROTEIN SEQUENCE OF 226-233</scope>
    <scope>IDENTIFICATION BY MASS SPECTROMETRY</scope>
    <source>
        <strain>OF1</strain>
        <tissue>Hippocampus</tissue>
    </source>
</reference>
<reference key="4">
    <citation type="journal article" date="2007" name="J. Proteome Res.">
        <title>A differential phosphoproteomic analysis of retinoic acid-treated P19 cells.</title>
        <authorList>
            <person name="Smith J.C."/>
            <person name="Duchesne M.A."/>
            <person name="Tozzi P."/>
            <person name="Ethier M."/>
            <person name="Figeys D."/>
        </authorList>
    </citation>
    <scope>IDENTIFICATION BY MASS SPECTROMETRY [LARGE SCALE ANALYSIS]</scope>
    <source>
        <tissue>Teratocarcinoma</tissue>
    </source>
</reference>
<reference key="5">
    <citation type="journal article" date="2007" name="Proc. Natl. Acad. Sci. U.S.A.">
        <title>Large-scale phosphorylation analysis of mouse liver.</title>
        <authorList>
            <person name="Villen J."/>
            <person name="Beausoleil S.A."/>
            <person name="Gerber S.A."/>
            <person name="Gygi S.P."/>
        </authorList>
    </citation>
    <scope>PHOSPHORYLATION [LARGE SCALE ANALYSIS] AT SER-335 AND SER-336</scope>
    <scope>IDENTIFICATION BY MASS SPECTROMETRY [LARGE SCALE ANALYSIS]</scope>
    <source>
        <tissue>Liver</tissue>
    </source>
</reference>
<reference key="6">
    <citation type="journal article" date="2010" name="Cell">
        <title>A tissue-specific atlas of mouse protein phosphorylation and expression.</title>
        <authorList>
            <person name="Huttlin E.L."/>
            <person name="Jedrychowski M.P."/>
            <person name="Elias J.E."/>
            <person name="Goswami T."/>
            <person name="Rad R."/>
            <person name="Beausoleil S.A."/>
            <person name="Villen J."/>
            <person name="Haas W."/>
            <person name="Sowa M.E."/>
            <person name="Gygi S.P."/>
        </authorList>
    </citation>
    <scope>PHOSPHORYLATION [LARGE SCALE ANALYSIS] AT SER-333; SER-335 AND SER-336</scope>
    <scope>IDENTIFICATION BY MASS SPECTROMETRY [LARGE SCALE ANALYSIS]</scope>
    <source>
        <tissue>Brain</tissue>
        <tissue>Brown adipose tissue</tissue>
        <tissue>Kidney</tissue>
        <tissue>Liver</tissue>
        <tissue>Lung</tissue>
        <tissue>Pancreas</tissue>
        <tissue>Spleen</tissue>
        <tissue>Testis</tissue>
    </source>
</reference>
<reference key="7">
    <citation type="journal article" date="2014" name="Nature">
        <title>Citrullination regulates pluripotency and histone H1 binding to chromatin.</title>
        <authorList>
            <person name="Christophorou M.A."/>
            <person name="Castelo-Branco G."/>
            <person name="Halley-Stott R.P."/>
            <person name="Oliveira C.S."/>
            <person name="Loos R."/>
            <person name="Radzisheuskaya A."/>
            <person name="Mowen K.A."/>
            <person name="Bertone P."/>
            <person name="Silva J.C."/>
            <person name="Zernicka-Goetz M."/>
            <person name="Nielsen M.L."/>
            <person name="Gurdon J.B."/>
            <person name="Kouzarides T."/>
        </authorList>
    </citation>
    <scope>CITRULLINATION AT ARG-390 AND ARG-774</scope>
</reference>
<evidence type="ECO:0000250" key="1">
    <source>
        <dbReference type="UniProtKB" id="Q5RJT2"/>
    </source>
</evidence>
<evidence type="ECO:0000250" key="2">
    <source>
        <dbReference type="UniProtKB" id="Q8IY81"/>
    </source>
</evidence>
<evidence type="ECO:0000255" key="3">
    <source>
        <dbReference type="HAMAP-Rule" id="MF_03163"/>
    </source>
</evidence>
<evidence type="ECO:0000256" key="4">
    <source>
        <dbReference type="SAM" id="MobiDB-lite"/>
    </source>
</evidence>
<evidence type="ECO:0000269" key="5">
    <source>
    </source>
</evidence>
<evidence type="ECO:0000305" key="6"/>
<evidence type="ECO:0007744" key="7">
    <source>
    </source>
</evidence>
<evidence type="ECO:0007744" key="8">
    <source>
    </source>
</evidence>
<name>SPB1_MOUSE</name>
<gene>
    <name type="primary">Ftsj3</name>
</gene>
<feature type="chain" id="PRO_0000155578" description="pre-rRNA 2'-O-ribose RNA methyltransferase FTSJ3">
    <location>
        <begin position="1"/>
        <end position="838"/>
    </location>
</feature>
<feature type="region of interest" description="Disordered" evidence="4">
    <location>
        <begin position="332"/>
        <end position="367"/>
    </location>
</feature>
<feature type="region of interest" description="Disordered" evidence="4">
    <location>
        <begin position="453"/>
        <end position="482"/>
    </location>
</feature>
<feature type="region of interest" description="Disordered" evidence="4">
    <location>
        <begin position="537"/>
        <end position="639"/>
    </location>
</feature>
<feature type="region of interest" description="Disordered" evidence="4">
    <location>
        <begin position="802"/>
        <end position="838"/>
    </location>
</feature>
<feature type="coiled-coil region" evidence="3">
    <location>
        <begin position="730"/>
        <end position="768"/>
    </location>
</feature>
<feature type="compositionally biased region" description="Acidic residues" evidence="4">
    <location>
        <begin position="336"/>
        <end position="348"/>
    </location>
</feature>
<feature type="compositionally biased region" description="Acidic residues" evidence="4">
    <location>
        <begin position="457"/>
        <end position="474"/>
    </location>
</feature>
<feature type="compositionally biased region" description="Basic residues" evidence="4">
    <location>
        <begin position="802"/>
        <end position="812"/>
    </location>
</feature>
<feature type="compositionally biased region" description="Basic and acidic residues" evidence="4">
    <location>
        <begin position="813"/>
        <end position="829"/>
    </location>
</feature>
<feature type="active site" description="Proton acceptor" evidence="3">
    <location>
        <position position="157"/>
    </location>
</feature>
<feature type="binding site" evidence="3">
    <location>
        <position position="56"/>
    </location>
    <ligand>
        <name>S-adenosyl-L-methionine</name>
        <dbReference type="ChEBI" id="CHEBI:59789"/>
    </ligand>
</feature>
<feature type="binding site" evidence="3">
    <location>
        <position position="58"/>
    </location>
    <ligand>
        <name>S-adenosyl-L-methionine</name>
        <dbReference type="ChEBI" id="CHEBI:59789"/>
    </ligand>
</feature>
<feature type="binding site" evidence="3">
    <location>
        <position position="76"/>
    </location>
    <ligand>
        <name>S-adenosyl-L-methionine</name>
        <dbReference type="ChEBI" id="CHEBI:59789"/>
    </ligand>
</feature>
<feature type="binding site" evidence="3">
    <location>
        <position position="92"/>
    </location>
    <ligand>
        <name>S-adenosyl-L-methionine</name>
        <dbReference type="ChEBI" id="CHEBI:59789"/>
    </ligand>
</feature>
<feature type="binding site" evidence="3">
    <location>
        <position position="117"/>
    </location>
    <ligand>
        <name>S-adenosyl-L-methionine</name>
        <dbReference type="ChEBI" id="CHEBI:59789"/>
    </ligand>
</feature>
<feature type="modified residue" description="Phosphoserine" evidence="8">
    <location>
        <position position="333"/>
    </location>
</feature>
<feature type="modified residue" description="Phosphoserine" evidence="7 8">
    <location>
        <position position="335"/>
    </location>
</feature>
<feature type="modified residue" description="Phosphoserine" evidence="7 8">
    <location>
        <position position="336"/>
    </location>
</feature>
<feature type="modified residue" description="Citrulline" evidence="5">
    <location>
        <position position="390"/>
    </location>
</feature>
<feature type="modified residue" description="Phosphoserine" evidence="1">
    <location>
        <position position="532"/>
    </location>
</feature>
<feature type="modified residue" description="Phosphoserine" evidence="2">
    <location>
        <position position="545"/>
    </location>
</feature>
<feature type="modified residue" description="Phosphoserine" evidence="2">
    <location>
        <position position="576"/>
    </location>
</feature>
<feature type="modified residue" description="Phosphoserine" evidence="2">
    <location>
        <position position="667"/>
    </location>
</feature>
<feature type="modified residue" description="Phosphoserine" evidence="2">
    <location>
        <position position="679"/>
    </location>
</feature>
<feature type="modified residue" description="Citrulline" evidence="5">
    <location>
        <position position="774"/>
    </location>
</feature>
<feature type="cross-link" description="Glycyl lysine isopeptide (Lys-Gly) (interchain with G-Cter in SUMO2)" evidence="2">
    <location>
        <position position="571"/>
    </location>
</feature>
<feature type="cross-link" description="Glycyl lysine isopeptide (Lys-Gly) (interchain with G-Cter in SUMO2)" evidence="2">
    <location>
        <position position="634"/>
    </location>
</feature>
<feature type="cross-link" description="Glycyl lysine isopeptide (Lys-Gly) (interchain with G-Cter in SUMO2)" evidence="2">
    <location>
        <position position="650"/>
    </location>
</feature>
<feature type="cross-link" description="Glycyl lysine isopeptide (Lys-Gly) (interchain with G-Cter in SUMO2)" evidence="2">
    <location>
        <position position="669"/>
    </location>
</feature>
<feature type="cross-link" description="Glycyl lysine isopeptide (Lys-Gly) (interchain with G-Cter in SUMO2)" evidence="2">
    <location>
        <position position="701"/>
    </location>
</feature>
<feature type="sequence conflict" description="In Ref. 2; AAH12281." evidence="6" ref="2">
    <original>K</original>
    <variation>R</variation>
    <location>
        <position position="233"/>
    </location>
</feature>
<feature type="sequence conflict" description="In Ref. 2; AAH12281." evidence="6" ref="2">
    <original>Q</original>
    <variation>K</variation>
    <location>
        <position position="494"/>
    </location>
</feature>
<feature type="sequence conflict" description="In Ref. 2; AAH12281." evidence="6" ref="2">
    <original>E</original>
    <variation>G</variation>
    <location>
        <position position="502"/>
    </location>
</feature>
<feature type="sequence conflict" description="In Ref. 2; AAH12281." evidence="6" ref="2">
    <original>Q</original>
    <variation>R</variation>
    <location>
        <position position="555"/>
    </location>
</feature>
<feature type="sequence conflict" description="In Ref. 2; AAH12281." evidence="6" ref="2">
    <original>V</original>
    <variation>M</variation>
    <location>
        <position position="744"/>
    </location>
</feature>
<feature type="sequence conflict" description="In Ref. 2; AAH12281." evidence="6" ref="2">
    <original>R</original>
    <variation>A</variation>
    <location>
        <position position="774"/>
    </location>
</feature>
<feature type="sequence conflict" description="In Ref. 2; AAH12281." evidence="6" ref="2">
    <original>LYKK</original>
    <variation>PVHT</variation>
    <location>
        <begin position="776"/>
        <end position="779"/>
    </location>
</feature>
<feature type="sequence conflict" description="In Ref. 2; AAH12281." evidence="6" ref="2">
    <original>KEKRQVTYVVAK</original>
    <variation>IAVIVRVFHLAF</variation>
    <location>
        <begin position="784"/>
        <end position="795"/>
    </location>
</feature>
<feature type="sequence conflict" description="In Ref. 2; AAH12281." evidence="6" ref="2">
    <original>GRKVRRPAGV</original>
    <variation>NHNNLPGCKP</variation>
    <location>
        <begin position="799"/>
        <end position="808"/>
    </location>
</feature>
<feature type="sequence conflict" description="In Ref. 2; AAH12281." evidence="6" ref="2">
    <original>F</original>
    <variation>A</variation>
    <location>
        <position position="812"/>
    </location>
</feature>
<feature type="sequence conflict" description="In Ref. 2; AAH12281." evidence="6" ref="2">
    <original>V</original>
    <variation>I</variation>
    <location>
        <position position="814"/>
    </location>
</feature>
<feature type="sequence conflict" description="In Ref. 2; AAH12281." evidence="6" ref="2">
    <original>DS</original>
    <variation>VA</variation>
    <location>
        <begin position="816"/>
        <end position="817"/>
    </location>
</feature>
<sequence>MGKKGKVGKSRRDKFYHLAKETGYRSRSAFKLIQLNRRFQFLQKARALLDLCAAPGGWLQVAAKFMPVSSLIVGVDLVPIKPLPNVVTLQEDITTERCRQALRKELKTWKVDVVLNDGAPNVGASWVHDAYSQAHLTLMALRLACDFLARGGCFITKVFRSRDYQPLLWIFQQLFHRVQATKPQASRHESAEIFVVCQGFLAPDKVDAKFFDPKFAFKEVEVQAKTVTELVTKKKPKAEGYAEGDLTLYHRTSVTDFLRAANPVDFLSKASEISIDDEELAQHPATTEDIRVCCQDIKVLGRKELRSLLNWRTKLRRYVAKKLKEQAKALDISLSSEEEEEGDEEEAVAETKQAPEEEEEREEEQLNRTLAEMKAQEVAELKRKKKKLLREQRKQRERVELKMDLPGVSIADEGETGMFSLRTIRGQQLLEEVTQGDMNAADTFLSDLPRDDIYVSDAEDDDDTSLESDLDPEELAGVRTHSDLKEQKYLRFTQVDDNKEEEGENPLLVPLEEKAVLQEEQASLWFSKDGFSGIEDDADEALEISQAQLLYKSRQKEQQPTDPPPPPTNLKTEKKSPQGQNEVPKETEAILGTEAVTDPGGEERGNSSDSDSSSSEDEDSWKVSRGVKRGRGSKADEDGFEVVPIQDPVKYRILDPEGLALGAVIASSKKAKRDLIDNSFNRYAFNEEEGELPEWFAQEEKQHRIRQLPVDKKEVEHYRKRWREINARPIKKVAEAKARKKRRVLKKLEQTKKKAEAVVNTVDISEREKVAQLRSLYKKAGLGKEKRQVTYVVAKKGVGRKVRRPAGVKGHFKVVDSRMKKDQRAQQRKEQKKKHKRK</sequence>
<organism>
    <name type="scientific">Mus musculus</name>
    <name type="common">Mouse</name>
    <dbReference type="NCBI Taxonomy" id="10090"/>
    <lineage>
        <taxon>Eukaryota</taxon>
        <taxon>Metazoa</taxon>
        <taxon>Chordata</taxon>
        <taxon>Craniata</taxon>
        <taxon>Vertebrata</taxon>
        <taxon>Euteleostomi</taxon>
        <taxon>Mammalia</taxon>
        <taxon>Eutheria</taxon>
        <taxon>Euarchontoglires</taxon>
        <taxon>Glires</taxon>
        <taxon>Rodentia</taxon>
        <taxon>Myomorpha</taxon>
        <taxon>Muroidea</taxon>
        <taxon>Muridae</taxon>
        <taxon>Murinae</taxon>
        <taxon>Mus</taxon>
        <taxon>Mus</taxon>
    </lineage>
</organism>